<reference key="1">
    <citation type="journal article" date="2007" name="Theor. Appl. Genet.">
        <title>Complete chloroplast genome sequences of Hordeum vulgare, Sorghum bicolor and Agrostis stolonifera, and comparative analyses with other grass genomes.</title>
        <authorList>
            <person name="Saski C."/>
            <person name="Lee S.-B."/>
            <person name="Fjellheim S."/>
            <person name="Guda C."/>
            <person name="Jansen R.K."/>
            <person name="Luo H."/>
            <person name="Tomkins J."/>
            <person name="Rognli O.A."/>
            <person name="Daniell H."/>
            <person name="Clarke J.L."/>
        </authorList>
    </citation>
    <scope>NUCLEOTIDE SEQUENCE [LARGE SCALE GENOMIC DNA]</scope>
    <source>
        <strain>cv. BTx623</strain>
    </source>
</reference>
<gene>
    <name evidence="1" type="primary">atpI</name>
</gene>
<dbReference type="EMBL" id="EF115542">
    <property type="protein sequence ID" value="ABK79490.1"/>
    <property type="molecule type" value="Genomic_DNA"/>
</dbReference>
<dbReference type="RefSeq" id="XP_002457873.1">
    <property type="nucleotide sequence ID" value="XM_002457828.1"/>
</dbReference>
<dbReference type="RefSeq" id="YP_899401.1">
    <property type="nucleotide sequence ID" value="NC_008602.1"/>
</dbReference>
<dbReference type="SMR" id="A1E9R8"/>
<dbReference type="FunCoup" id="A1E9R8">
    <property type="interactions" value="208"/>
</dbReference>
<dbReference type="STRING" id="4558.A1E9R8"/>
<dbReference type="EnsemblPlants" id="EES02993">
    <property type="protein sequence ID" value="EES02993"/>
    <property type="gene ID" value="SORBI_3003G169200"/>
</dbReference>
<dbReference type="GeneID" id="4549112"/>
<dbReference type="Gramene" id="EES02993">
    <property type="protein sequence ID" value="EES02993"/>
    <property type="gene ID" value="SORBI_3003G169200"/>
</dbReference>
<dbReference type="KEGG" id="sbi:4549112"/>
<dbReference type="eggNOG" id="KOG4665">
    <property type="taxonomic scope" value="Eukaryota"/>
</dbReference>
<dbReference type="HOGENOM" id="CLU_041018_2_4_1"/>
<dbReference type="InParanoid" id="A1E9R8"/>
<dbReference type="OMA" id="GFFWAAF"/>
<dbReference type="OrthoDB" id="734380at2759"/>
<dbReference type="Proteomes" id="UP000000768">
    <property type="component" value="Chloroplast"/>
</dbReference>
<dbReference type="ExpressionAtlas" id="A1E9R8">
    <property type="expression patterns" value="baseline"/>
</dbReference>
<dbReference type="GO" id="GO:0009535">
    <property type="term" value="C:chloroplast thylakoid membrane"/>
    <property type="evidence" value="ECO:0007669"/>
    <property type="project" value="UniProtKB-SubCell"/>
</dbReference>
<dbReference type="GO" id="GO:0005886">
    <property type="term" value="C:plasma membrane"/>
    <property type="evidence" value="ECO:0007669"/>
    <property type="project" value="UniProtKB-UniRule"/>
</dbReference>
<dbReference type="GO" id="GO:0045259">
    <property type="term" value="C:proton-transporting ATP synthase complex"/>
    <property type="evidence" value="ECO:0007669"/>
    <property type="project" value="UniProtKB-KW"/>
</dbReference>
<dbReference type="GO" id="GO:0046933">
    <property type="term" value="F:proton-transporting ATP synthase activity, rotational mechanism"/>
    <property type="evidence" value="ECO:0007669"/>
    <property type="project" value="UniProtKB-UniRule"/>
</dbReference>
<dbReference type="CDD" id="cd00310">
    <property type="entry name" value="ATP-synt_Fo_a_6"/>
    <property type="match status" value="1"/>
</dbReference>
<dbReference type="FunFam" id="1.20.120.220:FF:000001">
    <property type="entry name" value="ATP synthase subunit a, chloroplastic"/>
    <property type="match status" value="1"/>
</dbReference>
<dbReference type="Gene3D" id="1.20.120.220">
    <property type="entry name" value="ATP synthase, F0 complex, subunit A"/>
    <property type="match status" value="1"/>
</dbReference>
<dbReference type="HAMAP" id="MF_01393">
    <property type="entry name" value="ATP_synth_a_bact"/>
    <property type="match status" value="1"/>
</dbReference>
<dbReference type="InterPro" id="IPR045082">
    <property type="entry name" value="ATP_syn_F0_a_bact/chloroplast"/>
</dbReference>
<dbReference type="InterPro" id="IPR000568">
    <property type="entry name" value="ATP_synth_F0_asu"/>
</dbReference>
<dbReference type="InterPro" id="IPR023011">
    <property type="entry name" value="ATP_synth_F0_asu_AS"/>
</dbReference>
<dbReference type="InterPro" id="IPR035908">
    <property type="entry name" value="F0_ATP_A_sf"/>
</dbReference>
<dbReference type="NCBIfam" id="TIGR01131">
    <property type="entry name" value="ATP_synt_6_or_A"/>
    <property type="match status" value="1"/>
</dbReference>
<dbReference type="PANTHER" id="PTHR42823">
    <property type="entry name" value="ATP SYNTHASE SUBUNIT A, CHLOROPLASTIC"/>
    <property type="match status" value="1"/>
</dbReference>
<dbReference type="PANTHER" id="PTHR42823:SF3">
    <property type="entry name" value="ATP SYNTHASE SUBUNIT A, CHLOROPLASTIC"/>
    <property type="match status" value="1"/>
</dbReference>
<dbReference type="Pfam" id="PF00119">
    <property type="entry name" value="ATP-synt_A"/>
    <property type="match status" value="1"/>
</dbReference>
<dbReference type="PRINTS" id="PR00123">
    <property type="entry name" value="ATPASEA"/>
</dbReference>
<dbReference type="SUPFAM" id="SSF81336">
    <property type="entry name" value="F1F0 ATP synthase subunit A"/>
    <property type="match status" value="1"/>
</dbReference>
<dbReference type="PROSITE" id="PS00449">
    <property type="entry name" value="ATPASE_A"/>
    <property type="match status" value="1"/>
</dbReference>
<evidence type="ECO:0000255" key="1">
    <source>
        <dbReference type="HAMAP-Rule" id="MF_01393"/>
    </source>
</evidence>
<accession>A1E9R8</accession>
<geneLocation type="chloroplast"/>
<sequence>MNITPCSIKTLKGLYDISGVEVGQHFYWQIGGFQIHAQVLITSWFVITILLGSVIIAVRNPQTIPTDGQNFFEYVLEFIRDLSKTQIGEEYGPWVPFIGTMFLFIFVSNWSGALLPWKIIELPHGELAAPTNDINTTVALALLTSAAYFYAGLSKKGLSYFEKYIKPTPILLPINILEDFTKPLSLSFRLFGNILADELVVVVLVSLVPLVVPIPVMFLGLFTSGIQALIFATLAAAYIGESMEGHH</sequence>
<name>ATPI_SORBI</name>
<protein>
    <recommendedName>
        <fullName evidence="1">ATP synthase subunit a, chloroplastic</fullName>
    </recommendedName>
    <alternativeName>
        <fullName evidence="1">ATP synthase F0 sector subunit a</fullName>
    </alternativeName>
    <alternativeName>
        <fullName evidence="1">F-ATPase subunit IV</fullName>
    </alternativeName>
</protein>
<keyword id="KW-0066">ATP synthesis</keyword>
<keyword id="KW-0138">CF(0)</keyword>
<keyword id="KW-0150">Chloroplast</keyword>
<keyword id="KW-0375">Hydrogen ion transport</keyword>
<keyword id="KW-0406">Ion transport</keyword>
<keyword id="KW-0472">Membrane</keyword>
<keyword id="KW-0934">Plastid</keyword>
<keyword id="KW-1185">Reference proteome</keyword>
<keyword id="KW-0793">Thylakoid</keyword>
<keyword id="KW-0812">Transmembrane</keyword>
<keyword id="KW-1133">Transmembrane helix</keyword>
<keyword id="KW-0813">Transport</keyword>
<feature type="chain" id="PRO_0000362600" description="ATP synthase subunit a, chloroplastic">
    <location>
        <begin position="1"/>
        <end position="247"/>
    </location>
</feature>
<feature type="transmembrane region" description="Helical" evidence="1">
    <location>
        <begin position="38"/>
        <end position="58"/>
    </location>
</feature>
<feature type="transmembrane region" description="Helical" evidence="1">
    <location>
        <begin position="95"/>
        <end position="115"/>
    </location>
</feature>
<feature type="transmembrane region" description="Helical" evidence="1">
    <location>
        <begin position="134"/>
        <end position="154"/>
    </location>
</feature>
<feature type="transmembrane region" description="Helical" evidence="1">
    <location>
        <begin position="199"/>
        <end position="219"/>
    </location>
</feature>
<feature type="transmembrane region" description="Helical" evidence="1">
    <location>
        <begin position="220"/>
        <end position="240"/>
    </location>
</feature>
<proteinExistence type="inferred from homology"/>
<comment type="function">
    <text evidence="1">Key component of the proton channel; it plays a direct role in the translocation of protons across the membrane.</text>
</comment>
<comment type="subunit">
    <text evidence="1">F-type ATPases have 2 components, CF(1) - the catalytic core - and CF(0) - the membrane proton channel. CF(1) has five subunits: alpha(3), beta(3), gamma(1), delta(1), epsilon(1). CF(0) has four main subunits: a, b, b' and c.</text>
</comment>
<comment type="subcellular location">
    <subcellularLocation>
        <location evidence="1">Plastid</location>
        <location evidence="1">Chloroplast thylakoid membrane</location>
        <topology evidence="1">Multi-pass membrane protein</topology>
    </subcellularLocation>
</comment>
<comment type="similarity">
    <text evidence="1">Belongs to the ATPase A chain family.</text>
</comment>
<organism>
    <name type="scientific">Sorghum bicolor</name>
    <name type="common">Sorghum</name>
    <name type="synonym">Sorghum vulgare</name>
    <dbReference type="NCBI Taxonomy" id="4558"/>
    <lineage>
        <taxon>Eukaryota</taxon>
        <taxon>Viridiplantae</taxon>
        <taxon>Streptophyta</taxon>
        <taxon>Embryophyta</taxon>
        <taxon>Tracheophyta</taxon>
        <taxon>Spermatophyta</taxon>
        <taxon>Magnoliopsida</taxon>
        <taxon>Liliopsida</taxon>
        <taxon>Poales</taxon>
        <taxon>Poaceae</taxon>
        <taxon>PACMAD clade</taxon>
        <taxon>Panicoideae</taxon>
        <taxon>Andropogonodae</taxon>
        <taxon>Andropogoneae</taxon>
        <taxon>Sorghinae</taxon>
        <taxon>Sorghum</taxon>
    </lineage>
</organism>